<gene>
    <name evidence="2" type="primary">tuf1</name>
    <name type="ordered locus">Bcep18194_A3432</name>
</gene>
<gene>
    <name evidence="2" type="primary">tuf2</name>
    <name type="ordered locus">Bcep18194_A3445</name>
</gene>
<organism>
    <name type="scientific">Burkholderia lata (strain ATCC 17760 / DSM 23089 / LMG 22485 / NCIMB 9086 / R18194 / 383)</name>
    <dbReference type="NCBI Taxonomy" id="482957"/>
    <lineage>
        <taxon>Bacteria</taxon>
        <taxon>Pseudomonadati</taxon>
        <taxon>Pseudomonadota</taxon>
        <taxon>Betaproteobacteria</taxon>
        <taxon>Burkholderiales</taxon>
        <taxon>Burkholderiaceae</taxon>
        <taxon>Burkholderia</taxon>
        <taxon>Burkholderia cepacia complex</taxon>
    </lineage>
</organism>
<dbReference type="EC" id="3.6.5.3" evidence="2"/>
<dbReference type="EMBL" id="CP000151">
    <property type="protein sequence ID" value="ABB07034.1"/>
    <property type="molecule type" value="Genomic_DNA"/>
</dbReference>
<dbReference type="EMBL" id="CP000151">
    <property type="protein sequence ID" value="ABB07047.1"/>
    <property type="molecule type" value="Genomic_DNA"/>
</dbReference>
<dbReference type="SMR" id="Q39KI2"/>
<dbReference type="KEGG" id="bur:Bcep18194_A3432"/>
<dbReference type="KEGG" id="bur:Bcep18194_A3445"/>
<dbReference type="HOGENOM" id="CLU_007265_0_0_4"/>
<dbReference type="Proteomes" id="UP000002705">
    <property type="component" value="Chromosome 1"/>
</dbReference>
<dbReference type="GO" id="GO:0005829">
    <property type="term" value="C:cytosol"/>
    <property type="evidence" value="ECO:0007669"/>
    <property type="project" value="TreeGrafter"/>
</dbReference>
<dbReference type="GO" id="GO:0005525">
    <property type="term" value="F:GTP binding"/>
    <property type="evidence" value="ECO:0007669"/>
    <property type="project" value="UniProtKB-UniRule"/>
</dbReference>
<dbReference type="GO" id="GO:0003924">
    <property type="term" value="F:GTPase activity"/>
    <property type="evidence" value="ECO:0007669"/>
    <property type="project" value="InterPro"/>
</dbReference>
<dbReference type="GO" id="GO:0097216">
    <property type="term" value="F:guanosine tetraphosphate binding"/>
    <property type="evidence" value="ECO:0007669"/>
    <property type="project" value="UniProtKB-ARBA"/>
</dbReference>
<dbReference type="GO" id="GO:0003746">
    <property type="term" value="F:translation elongation factor activity"/>
    <property type="evidence" value="ECO:0007669"/>
    <property type="project" value="UniProtKB-UniRule"/>
</dbReference>
<dbReference type="CDD" id="cd01884">
    <property type="entry name" value="EF_Tu"/>
    <property type="match status" value="1"/>
</dbReference>
<dbReference type="CDD" id="cd03697">
    <property type="entry name" value="EFTU_II"/>
    <property type="match status" value="1"/>
</dbReference>
<dbReference type="CDD" id="cd03707">
    <property type="entry name" value="EFTU_III"/>
    <property type="match status" value="1"/>
</dbReference>
<dbReference type="FunFam" id="2.40.30.10:FF:000001">
    <property type="entry name" value="Elongation factor Tu"/>
    <property type="match status" value="1"/>
</dbReference>
<dbReference type="FunFam" id="3.40.50.300:FF:000003">
    <property type="entry name" value="Elongation factor Tu"/>
    <property type="match status" value="1"/>
</dbReference>
<dbReference type="Gene3D" id="3.40.50.300">
    <property type="entry name" value="P-loop containing nucleotide triphosphate hydrolases"/>
    <property type="match status" value="1"/>
</dbReference>
<dbReference type="Gene3D" id="2.40.30.10">
    <property type="entry name" value="Translation factors"/>
    <property type="match status" value="2"/>
</dbReference>
<dbReference type="HAMAP" id="MF_00118_B">
    <property type="entry name" value="EF_Tu_B"/>
    <property type="match status" value="1"/>
</dbReference>
<dbReference type="InterPro" id="IPR041709">
    <property type="entry name" value="EF-Tu_GTP-bd"/>
</dbReference>
<dbReference type="InterPro" id="IPR050055">
    <property type="entry name" value="EF-Tu_GTPase"/>
</dbReference>
<dbReference type="InterPro" id="IPR004161">
    <property type="entry name" value="EFTu-like_2"/>
</dbReference>
<dbReference type="InterPro" id="IPR033720">
    <property type="entry name" value="EFTU_2"/>
</dbReference>
<dbReference type="InterPro" id="IPR031157">
    <property type="entry name" value="G_TR_CS"/>
</dbReference>
<dbReference type="InterPro" id="IPR027417">
    <property type="entry name" value="P-loop_NTPase"/>
</dbReference>
<dbReference type="InterPro" id="IPR005225">
    <property type="entry name" value="Small_GTP-bd"/>
</dbReference>
<dbReference type="InterPro" id="IPR000795">
    <property type="entry name" value="T_Tr_GTP-bd_dom"/>
</dbReference>
<dbReference type="InterPro" id="IPR009000">
    <property type="entry name" value="Transl_B-barrel_sf"/>
</dbReference>
<dbReference type="InterPro" id="IPR009001">
    <property type="entry name" value="Transl_elong_EF1A/Init_IF2_C"/>
</dbReference>
<dbReference type="InterPro" id="IPR004541">
    <property type="entry name" value="Transl_elong_EFTu/EF1A_bac/org"/>
</dbReference>
<dbReference type="InterPro" id="IPR004160">
    <property type="entry name" value="Transl_elong_EFTu/EF1A_C"/>
</dbReference>
<dbReference type="NCBIfam" id="TIGR00485">
    <property type="entry name" value="EF-Tu"/>
    <property type="match status" value="1"/>
</dbReference>
<dbReference type="NCBIfam" id="NF000766">
    <property type="entry name" value="PRK00049.1"/>
    <property type="match status" value="1"/>
</dbReference>
<dbReference type="NCBIfam" id="NF009372">
    <property type="entry name" value="PRK12735.1"/>
    <property type="match status" value="1"/>
</dbReference>
<dbReference type="NCBIfam" id="NF009373">
    <property type="entry name" value="PRK12736.1"/>
    <property type="match status" value="1"/>
</dbReference>
<dbReference type="NCBIfam" id="TIGR00231">
    <property type="entry name" value="small_GTP"/>
    <property type="match status" value="1"/>
</dbReference>
<dbReference type="PANTHER" id="PTHR43721:SF22">
    <property type="entry name" value="ELONGATION FACTOR TU, MITOCHONDRIAL"/>
    <property type="match status" value="1"/>
</dbReference>
<dbReference type="PANTHER" id="PTHR43721">
    <property type="entry name" value="ELONGATION FACTOR TU-RELATED"/>
    <property type="match status" value="1"/>
</dbReference>
<dbReference type="Pfam" id="PF00009">
    <property type="entry name" value="GTP_EFTU"/>
    <property type="match status" value="1"/>
</dbReference>
<dbReference type="Pfam" id="PF03144">
    <property type="entry name" value="GTP_EFTU_D2"/>
    <property type="match status" value="1"/>
</dbReference>
<dbReference type="Pfam" id="PF03143">
    <property type="entry name" value="GTP_EFTU_D3"/>
    <property type="match status" value="1"/>
</dbReference>
<dbReference type="PRINTS" id="PR00315">
    <property type="entry name" value="ELONGATNFCT"/>
</dbReference>
<dbReference type="SUPFAM" id="SSF50465">
    <property type="entry name" value="EF-Tu/eEF-1alpha/eIF2-gamma C-terminal domain"/>
    <property type="match status" value="1"/>
</dbReference>
<dbReference type="SUPFAM" id="SSF52540">
    <property type="entry name" value="P-loop containing nucleoside triphosphate hydrolases"/>
    <property type="match status" value="1"/>
</dbReference>
<dbReference type="SUPFAM" id="SSF50447">
    <property type="entry name" value="Translation proteins"/>
    <property type="match status" value="1"/>
</dbReference>
<dbReference type="PROSITE" id="PS00301">
    <property type="entry name" value="G_TR_1"/>
    <property type="match status" value="1"/>
</dbReference>
<dbReference type="PROSITE" id="PS51722">
    <property type="entry name" value="G_TR_2"/>
    <property type="match status" value="1"/>
</dbReference>
<reference key="1">
    <citation type="submission" date="2005-10" db="EMBL/GenBank/DDBJ databases">
        <title>Complete sequence of chromosome 1 of Burkholderia sp. 383.</title>
        <authorList>
            <consortium name="US DOE Joint Genome Institute"/>
            <person name="Copeland A."/>
            <person name="Lucas S."/>
            <person name="Lapidus A."/>
            <person name="Barry K."/>
            <person name="Detter J.C."/>
            <person name="Glavina T."/>
            <person name="Hammon N."/>
            <person name="Israni S."/>
            <person name="Pitluck S."/>
            <person name="Chain P."/>
            <person name="Malfatti S."/>
            <person name="Shin M."/>
            <person name="Vergez L."/>
            <person name="Schmutz J."/>
            <person name="Larimer F."/>
            <person name="Land M."/>
            <person name="Kyrpides N."/>
            <person name="Lykidis A."/>
            <person name="Richardson P."/>
        </authorList>
    </citation>
    <scope>NUCLEOTIDE SEQUENCE [LARGE SCALE GENOMIC DNA]</scope>
    <source>
        <strain>ATCC 17760 / DSM 23089 / LMG 22485 / NCIMB 9086 / R18194 / 383</strain>
    </source>
</reference>
<proteinExistence type="inferred from homology"/>
<accession>Q39KI2</accession>
<keyword id="KW-0963">Cytoplasm</keyword>
<keyword id="KW-0251">Elongation factor</keyword>
<keyword id="KW-0342">GTP-binding</keyword>
<keyword id="KW-0378">Hydrolase</keyword>
<keyword id="KW-0460">Magnesium</keyword>
<keyword id="KW-0479">Metal-binding</keyword>
<keyword id="KW-0547">Nucleotide-binding</keyword>
<keyword id="KW-0648">Protein biosynthesis</keyword>
<comment type="function">
    <text evidence="2">GTP hydrolase that promotes the GTP-dependent binding of aminoacyl-tRNA to the A-site of ribosomes during protein biosynthesis.</text>
</comment>
<comment type="catalytic activity">
    <reaction evidence="2">
        <text>GTP + H2O = GDP + phosphate + H(+)</text>
        <dbReference type="Rhea" id="RHEA:19669"/>
        <dbReference type="ChEBI" id="CHEBI:15377"/>
        <dbReference type="ChEBI" id="CHEBI:15378"/>
        <dbReference type="ChEBI" id="CHEBI:37565"/>
        <dbReference type="ChEBI" id="CHEBI:43474"/>
        <dbReference type="ChEBI" id="CHEBI:58189"/>
        <dbReference type="EC" id="3.6.5.3"/>
    </reaction>
    <physiologicalReaction direction="left-to-right" evidence="2">
        <dbReference type="Rhea" id="RHEA:19670"/>
    </physiologicalReaction>
</comment>
<comment type="subunit">
    <text evidence="2">Monomer.</text>
</comment>
<comment type="subcellular location">
    <subcellularLocation>
        <location evidence="2">Cytoplasm</location>
    </subcellularLocation>
</comment>
<comment type="similarity">
    <text evidence="2">Belongs to the TRAFAC class translation factor GTPase superfamily. Classic translation factor GTPase family. EF-Tu/EF-1A subfamily.</text>
</comment>
<feature type="chain" id="PRO_0000337345" description="Elongation factor Tu">
    <location>
        <begin position="1"/>
        <end position="396"/>
    </location>
</feature>
<feature type="domain" description="tr-type G">
    <location>
        <begin position="10"/>
        <end position="206"/>
    </location>
</feature>
<feature type="region of interest" description="G1" evidence="1">
    <location>
        <begin position="19"/>
        <end position="26"/>
    </location>
</feature>
<feature type="region of interest" description="G2" evidence="1">
    <location>
        <begin position="60"/>
        <end position="64"/>
    </location>
</feature>
<feature type="region of interest" description="G3" evidence="1">
    <location>
        <begin position="81"/>
        <end position="84"/>
    </location>
</feature>
<feature type="region of interest" description="G4" evidence="1">
    <location>
        <begin position="136"/>
        <end position="139"/>
    </location>
</feature>
<feature type="region of interest" description="G5" evidence="1">
    <location>
        <begin position="174"/>
        <end position="176"/>
    </location>
</feature>
<feature type="binding site" evidence="2">
    <location>
        <begin position="19"/>
        <end position="26"/>
    </location>
    <ligand>
        <name>GTP</name>
        <dbReference type="ChEBI" id="CHEBI:37565"/>
    </ligand>
</feature>
<feature type="binding site" evidence="2">
    <location>
        <position position="26"/>
    </location>
    <ligand>
        <name>Mg(2+)</name>
        <dbReference type="ChEBI" id="CHEBI:18420"/>
    </ligand>
</feature>
<feature type="binding site" evidence="2">
    <location>
        <begin position="81"/>
        <end position="85"/>
    </location>
    <ligand>
        <name>GTP</name>
        <dbReference type="ChEBI" id="CHEBI:37565"/>
    </ligand>
</feature>
<feature type="binding site" evidence="2">
    <location>
        <begin position="136"/>
        <end position="139"/>
    </location>
    <ligand>
        <name>GTP</name>
        <dbReference type="ChEBI" id="CHEBI:37565"/>
    </ligand>
</feature>
<name>EFTU_BURL3</name>
<evidence type="ECO:0000250" key="1"/>
<evidence type="ECO:0000255" key="2">
    <source>
        <dbReference type="HAMAP-Rule" id="MF_00118"/>
    </source>
</evidence>
<sequence>MAKGKFERTKPHVNVGTIGHVDHGKTTLTAAITTVLTKKFGGEAKAYDQIDAAPEEKARGITINTAHVEYETANRHYAHVDCPGHADYVKNMITGAAQMDGAILVCSAADGPMPQTREHILLARQVGVPYIIVFLNKCDMVDDAELLELVEMEVRELLSKYDFPGDDTPIVKGSAKLALEGDTGELGEVAIMSLADALDTYIPTPERAVDGAFLMPVEDVFSISGRGTVVTGRVERGIVKVGEEIEIVGIKPTVKTTCTGVEMFRKLLDQGQAGDNVGILLRGTKREDVERGQVLAKPGSITPHTHFTAEVYVLSKDEGGRHTPFFNNYRPQFYFRTTDVTGSIELPKDKEMVMPGDNVSITVKLIAPIAMEEGLRFAIREGGRTVGAGVVAKIIE</sequence>
<protein>
    <recommendedName>
        <fullName evidence="2">Elongation factor Tu</fullName>
        <shortName evidence="2">EF-Tu</shortName>
        <ecNumber evidence="2">3.6.5.3</ecNumber>
    </recommendedName>
</protein>